<feature type="chain" id="PRO_0000371297" description="Reticulon-like protein B16">
    <location>
        <begin position="1"/>
        <end position="226"/>
    </location>
</feature>
<feature type="transmembrane region" description="Helical" evidence="2">
    <location>
        <begin position="54"/>
        <end position="74"/>
    </location>
</feature>
<feature type="transmembrane region" description="Helical" evidence="2">
    <location>
        <begin position="75"/>
        <end position="95"/>
    </location>
</feature>
<feature type="transmembrane region" description="Helical" evidence="2">
    <location>
        <begin position="149"/>
        <end position="169"/>
    </location>
</feature>
<feature type="domain" description="Reticulon" evidence="3">
    <location>
        <begin position="41"/>
        <end position="224"/>
    </location>
</feature>
<feature type="splice variant" id="VSP_037010" description="In isoform 2." evidence="4">
    <location>
        <begin position="1"/>
        <end position="33"/>
    </location>
</feature>
<feature type="splice variant" id="VSP_037011" description="In isoform 2." evidence="4">
    <original>QFMGGGK</original>
    <variation>MALFFDV</variation>
    <location>
        <begin position="34"/>
        <end position="40"/>
    </location>
</feature>
<evidence type="ECO:0000250" key="1">
    <source>
        <dbReference type="UniProtKB" id="Q9SH59"/>
    </source>
</evidence>
<evidence type="ECO:0000255" key="2"/>
<evidence type="ECO:0000255" key="3">
    <source>
        <dbReference type="PROSITE-ProRule" id="PRU00170"/>
    </source>
</evidence>
<evidence type="ECO:0000303" key="4">
    <source ref="5"/>
</evidence>
<organism>
    <name type="scientific">Arabidopsis thaliana</name>
    <name type="common">Mouse-ear cress</name>
    <dbReference type="NCBI Taxonomy" id="3702"/>
    <lineage>
        <taxon>Eukaryota</taxon>
        <taxon>Viridiplantae</taxon>
        <taxon>Streptophyta</taxon>
        <taxon>Embryophyta</taxon>
        <taxon>Tracheophyta</taxon>
        <taxon>Spermatophyta</taxon>
        <taxon>Magnoliopsida</taxon>
        <taxon>eudicotyledons</taxon>
        <taxon>Gunneridae</taxon>
        <taxon>Pentapetalae</taxon>
        <taxon>rosids</taxon>
        <taxon>malvids</taxon>
        <taxon>Brassicales</taxon>
        <taxon>Brassicaceae</taxon>
        <taxon>Camelineae</taxon>
        <taxon>Arabidopsis</taxon>
    </lineage>
</organism>
<reference key="1">
    <citation type="journal article" date="2000" name="Nature">
        <title>Sequence and analysis of chromosome 3 of the plant Arabidopsis thaliana.</title>
        <authorList>
            <person name="Salanoubat M."/>
            <person name="Lemcke K."/>
            <person name="Rieger M."/>
            <person name="Ansorge W."/>
            <person name="Unseld M."/>
            <person name="Fartmann B."/>
            <person name="Valle G."/>
            <person name="Bloecker H."/>
            <person name="Perez-Alonso M."/>
            <person name="Obermaier B."/>
            <person name="Delseny M."/>
            <person name="Boutry M."/>
            <person name="Grivell L.A."/>
            <person name="Mache R."/>
            <person name="Puigdomenech P."/>
            <person name="De Simone V."/>
            <person name="Choisne N."/>
            <person name="Artiguenave F."/>
            <person name="Robert C."/>
            <person name="Brottier P."/>
            <person name="Wincker P."/>
            <person name="Cattolico L."/>
            <person name="Weissenbach J."/>
            <person name="Saurin W."/>
            <person name="Quetier F."/>
            <person name="Schaefer M."/>
            <person name="Mueller-Auer S."/>
            <person name="Gabel C."/>
            <person name="Fuchs M."/>
            <person name="Benes V."/>
            <person name="Wurmbach E."/>
            <person name="Drzonek H."/>
            <person name="Erfle H."/>
            <person name="Jordan N."/>
            <person name="Bangert S."/>
            <person name="Wiedelmann R."/>
            <person name="Kranz H."/>
            <person name="Voss H."/>
            <person name="Holland R."/>
            <person name="Brandt P."/>
            <person name="Nyakatura G."/>
            <person name="Vezzi A."/>
            <person name="D'Angelo M."/>
            <person name="Pallavicini A."/>
            <person name="Toppo S."/>
            <person name="Simionati B."/>
            <person name="Conrad A."/>
            <person name="Hornischer K."/>
            <person name="Kauer G."/>
            <person name="Loehnert T.-H."/>
            <person name="Nordsiek G."/>
            <person name="Reichelt J."/>
            <person name="Scharfe M."/>
            <person name="Schoen O."/>
            <person name="Bargues M."/>
            <person name="Terol J."/>
            <person name="Climent J."/>
            <person name="Navarro P."/>
            <person name="Collado C."/>
            <person name="Perez-Perez A."/>
            <person name="Ottenwaelder B."/>
            <person name="Duchemin D."/>
            <person name="Cooke R."/>
            <person name="Laudie M."/>
            <person name="Berger-Llauro C."/>
            <person name="Purnelle B."/>
            <person name="Masuy D."/>
            <person name="de Haan M."/>
            <person name="Maarse A.C."/>
            <person name="Alcaraz J.-P."/>
            <person name="Cottet A."/>
            <person name="Casacuberta E."/>
            <person name="Monfort A."/>
            <person name="Argiriou A."/>
            <person name="Flores M."/>
            <person name="Liguori R."/>
            <person name="Vitale D."/>
            <person name="Mannhaupt G."/>
            <person name="Haase D."/>
            <person name="Schoof H."/>
            <person name="Rudd S."/>
            <person name="Zaccaria P."/>
            <person name="Mewes H.-W."/>
            <person name="Mayer K.F.X."/>
            <person name="Kaul S."/>
            <person name="Town C.D."/>
            <person name="Koo H.L."/>
            <person name="Tallon L.J."/>
            <person name="Jenkins J."/>
            <person name="Rooney T."/>
            <person name="Rizzo M."/>
            <person name="Walts A."/>
            <person name="Utterback T."/>
            <person name="Fujii C.Y."/>
            <person name="Shea T.P."/>
            <person name="Creasy T.H."/>
            <person name="Haas B."/>
            <person name="Maiti R."/>
            <person name="Wu D."/>
            <person name="Peterson J."/>
            <person name="Van Aken S."/>
            <person name="Pai G."/>
            <person name="Militscher J."/>
            <person name="Sellers P."/>
            <person name="Gill J.E."/>
            <person name="Feldblyum T.V."/>
            <person name="Preuss D."/>
            <person name="Lin X."/>
            <person name="Nierman W.C."/>
            <person name="Salzberg S.L."/>
            <person name="White O."/>
            <person name="Venter J.C."/>
            <person name="Fraser C.M."/>
            <person name="Kaneko T."/>
            <person name="Nakamura Y."/>
            <person name="Sato S."/>
            <person name="Kato T."/>
            <person name="Asamizu E."/>
            <person name="Sasamoto S."/>
            <person name="Kimura T."/>
            <person name="Idesawa K."/>
            <person name="Kawashima K."/>
            <person name="Kishida Y."/>
            <person name="Kiyokawa C."/>
            <person name="Kohara M."/>
            <person name="Matsumoto M."/>
            <person name="Matsuno A."/>
            <person name="Muraki A."/>
            <person name="Nakayama S."/>
            <person name="Nakazaki N."/>
            <person name="Shinpo S."/>
            <person name="Takeuchi C."/>
            <person name="Wada T."/>
            <person name="Watanabe A."/>
            <person name="Yamada M."/>
            <person name="Yasuda M."/>
            <person name="Tabata S."/>
        </authorList>
    </citation>
    <scope>NUCLEOTIDE SEQUENCE [LARGE SCALE GENOMIC DNA]</scope>
    <source>
        <strain>cv. Columbia</strain>
    </source>
</reference>
<reference key="2">
    <citation type="journal article" date="2017" name="Plant J.">
        <title>Araport11: a complete reannotation of the Arabidopsis thaliana reference genome.</title>
        <authorList>
            <person name="Cheng C.Y."/>
            <person name="Krishnakumar V."/>
            <person name="Chan A.P."/>
            <person name="Thibaud-Nissen F."/>
            <person name="Schobel S."/>
            <person name="Town C.D."/>
        </authorList>
    </citation>
    <scope>GENOME REANNOTATION</scope>
    <source>
        <strain>cv. Columbia</strain>
    </source>
</reference>
<reference key="3">
    <citation type="journal article" date="2002" name="Science">
        <title>Functional annotation of a full-length Arabidopsis cDNA collection.</title>
        <authorList>
            <person name="Seki M."/>
            <person name="Narusaka M."/>
            <person name="Kamiya A."/>
            <person name="Ishida J."/>
            <person name="Satou M."/>
            <person name="Sakurai T."/>
            <person name="Nakajima M."/>
            <person name="Enju A."/>
            <person name="Akiyama K."/>
            <person name="Oono Y."/>
            <person name="Muramatsu M."/>
            <person name="Hayashizaki Y."/>
            <person name="Kawai J."/>
            <person name="Carninci P."/>
            <person name="Itoh M."/>
            <person name="Ishii Y."/>
            <person name="Arakawa T."/>
            <person name="Shibata K."/>
            <person name="Shinagawa A."/>
            <person name="Shinozaki K."/>
        </authorList>
    </citation>
    <scope>NUCLEOTIDE SEQUENCE [LARGE SCALE MRNA] (ISOFORM 1)</scope>
    <source>
        <strain>cv. Columbia</strain>
    </source>
</reference>
<reference key="4">
    <citation type="journal article" date="2003" name="Science">
        <title>Empirical analysis of transcriptional activity in the Arabidopsis genome.</title>
        <authorList>
            <person name="Yamada K."/>
            <person name="Lim J."/>
            <person name="Dale J.M."/>
            <person name="Chen H."/>
            <person name="Shinn P."/>
            <person name="Palm C.J."/>
            <person name="Southwick A.M."/>
            <person name="Wu H.C."/>
            <person name="Kim C.J."/>
            <person name="Nguyen M."/>
            <person name="Pham P.K."/>
            <person name="Cheuk R.F."/>
            <person name="Karlin-Newmann G."/>
            <person name="Liu S.X."/>
            <person name="Lam B."/>
            <person name="Sakano H."/>
            <person name="Wu T."/>
            <person name="Yu G."/>
            <person name="Miranda M."/>
            <person name="Quach H.L."/>
            <person name="Tripp M."/>
            <person name="Chang C.H."/>
            <person name="Lee J.M."/>
            <person name="Toriumi M.J."/>
            <person name="Chan M.M."/>
            <person name="Tang C.C."/>
            <person name="Onodera C.S."/>
            <person name="Deng J.M."/>
            <person name="Akiyama K."/>
            <person name="Ansari Y."/>
            <person name="Arakawa T."/>
            <person name="Banh J."/>
            <person name="Banno F."/>
            <person name="Bowser L."/>
            <person name="Brooks S.Y."/>
            <person name="Carninci P."/>
            <person name="Chao Q."/>
            <person name="Choy N."/>
            <person name="Enju A."/>
            <person name="Goldsmith A.D."/>
            <person name="Gurjal M."/>
            <person name="Hansen N.F."/>
            <person name="Hayashizaki Y."/>
            <person name="Johnson-Hopson C."/>
            <person name="Hsuan V.W."/>
            <person name="Iida K."/>
            <person name="Karnes M."/>
            <person name="Khan S."/>
            <person name="Koesema E."/>
            <person name="Ishida J."/>
            <person name="Jiang P.X."/>
            <person name="Jones T."/>
            <person name="Kawai J."/>
            <person name="Kamiya A."/>
            <person name="Meyers C."/>
            <person name="Nakajima M."/>
            <person name="Narusaka M."/>
            <person name="Seki M."/>
            <person name="Sakurai T."/>
            <person name="Satou M."/>
            <person name="Tamse R."/>
            <person name="Vaysberg M."/>
            <person name="Wallender E.K."/>
            <person name="Wong C."/>
            <person name="Yamamura Y."/>
            <person name="Yuan S."/>
            <person name="Shinozaki K."/>
            <person name="Davis R.W."/>
            <person name="Theologis A."/>
            <person name="Ecker J.R."/>
        </authorList>
    </citation>
    <scope>NUCLEOTIDE SEQUENCE [LARGE SCALE MRNA] (ISOFORM 1)</scope>
    <source>
        <strain>cv. Columbia</strain>
    </source>
</reference>
<reference key="5">
    <citation type="submission" date="2006-07" db="EMBL/GenBank/DDBJ databases">
        <title>Large-scale analysis of RIKEN Arabidopsis full-length (RAFL) cDNAs.</title>
        <authorList>
            <person name="Totoki Y."/>
            <person name="Seki M."/>
            <person name="Ishida J."/>
            <person name="Nakajima M."/>
            <person name="Enju A."/>
            <person name="Kamiya A."/>
            <person name="Narusaka M."/>
            <person name="Shin-i T."/>
            <person name="Nakagawa M."/>
            <person name="Sakamoto N."/>
            <person name="Oishi K."/>
            <person name="Kohara Y."/>
            <person name="Kobayashi M."/>
            <person name="Toyoda A."/>
            <person name="Sakaki Y."/>
            <person name="Sakurai T."/>
            <person name="Iida K."/>
            <person name="Akiyama K."/>
            <person name="Satou M."/>
            <person name="Toyoda T."/>
            <person name="Konagaya A."/>
            <person name="Carninci P."/>
            <person name="Kawai J."/>
            <person name="Hayashizaki Y."/>
            <person name="Shinozaki K."/>
        </authorList>
    </citation>
    <scope>NUCLEOTIDE SEQUENCE [LARGE SCALE MRNA] (ISOFORM 2)</scope>
    <source>
        <strain>cv. Columbia</strain>
    </source>
</reference>
<reference key="6">
    <citation type="journal article" date="2007" name="FEBS Lett.">
        <title>Reticulon-like proteins in Arabidopsis thaliana: structural organization and ER localization.</title>
        <authorList>
            <person name="Nziengui H."/>
            <person name="Bouhidel K."/>
            <person name="Pillon D."/>
            <person name="Der C."/>
            <person name="Marty F."/>
            <person name="Schoefs B."/>
        </authorList>
    </citation>
    <scope>GENE FAMILY</scope>
    <scope>NOMENCLATURE</scope>
</reference>
<proteinExistence type="evidence at transcript level"/>
<comment type="subcellular location">
    <subcellularLocation>
        <location evidence="1">Endoplasmic reticulum membrane</location>
        <topology evidence="2">Multi-pass membrane protein</topology>
    </subcellularLocation>
</comment>
<comment type="alternative products">
    <event type="alternative splicing"/>
    <isoform>
        <id>Q8GYH6-1</id>
        <name>1</name>
        <sequence type="displayed"/>
    </isoform>
    <isoform>
        <id>Q8GYH6-2</id>
        <name>2</name>
        <sequence type="described" ref="VSP_037010 VSP_037011"/>
    </isoform>
</comment>
<dbReference type="EMBL" id="AC009991">
    <property type="status" value="NOT_ANNOTATED_CDS"/>
    <property type="molecule type" value="Genomic_DNA"/>
</dbReference>
<dbReference type="EMBL" id="CP002686">
    <property type="protein sequence ID" value="AEE74972.1"/>
    <property type="molecule type" value="Genomic_DNA"/>
</dbReference>
<dbReference type="EMBL" id="CP002686">
    <property type="protein sequence ID" value="AEE74973.1"/>
    <property type="molecule type" value="Genomic_DNA"/>
</dbReference>
<dbReference type="EMBL" id="AK117619">
    <property type="protein sequence ID" value="BAC42275.1"/>
    <property type="molecule type" value="mRNA"/>
</dbReference>
<dbReference type="EMBL" id="BT005108">
    <property type="protein sequence ID" value="AAO50641.1"/>
    <property type="molecule type" value="mRNA"/>
</dbReference>
<dbReference type="EMBL" id="AK227715">
    <property type="protein sequence ID" value="BAE99701.1"/>
    <property type="molecule type" value="mRNA"/>
</dbReference>
<dbReference type="RefSeq" id="NP_974275.1">
    <molecule id="Q8GYH6-1"/>
    <property type="nucleotide sequence ID" value="NM_202546.4"/>
</dbReference>
<dbReference type="RefSeq" id="NP_974276.3">
    <molecule id="Q8GYH6-2"/>
    <property type="nucleotide sequence ID" value="NM_202547.4"/>
</dbReference>
<dbReference type="SMR" id="Q8GYH6"/>
<dbReference type="FunCoup" id="Q8GYH6">
    <property type="interactions" value="1416"/>
</dbReference>
<dbReference type="PaxDb" id="3702-AT3G10915.5"/>
<dbReference type="EnsemblPlants" id="AT3G10915.2">
    <molecule id="Q8GYH6-1"/>
    <property type="protein sequence ID" value="AT3G10915.2"/>
    <property type="gene ID" value="AT3G10915"/>
</dbReference>
<dbReference type="EnsemblPlants" id="AT3G10915.3">
    <molecule id="Q8GYH6-2"/>
    <property type="protein sequence ID" value="AT3G10915.3"/>
    <property type="gene ID" value="AT3G10915"/>
</dbReference>
<dbReference type="GeneID" id="820262"/>
<dbReference type="Gramene" id="AT3G10915.2">
    <molecule id="Q8GYH6-1"/>
    <property type="protein sequence ID" value="AT3G10915.2"/>
    <property type="gene ID" value="AT3G10915"/>
</dbReference>
<dbReference type="Gramene" id="AT3G10915.3">
    <molecule id="Q8GYH6-2"/>
    <property type="protein sequence ID" value="AT3G10915.3"/>
    <property type="gene ID" value="AT3G10915"/>
</dbReference>
<dbReference type="KEGG" id="ath:AT3G10915"/>
<dbReference type="Araport" id="AT3G10915"/>
<dbReference type="TAIR" id="AT3G10915"/>
<dbReference type="eggNOG" id="KOG1792">
    <property type="taxonomic scope" value="Eukaryota"/>
</dbReference>
<dbReference type="InParanoid" id="Q8GYH6"/>
<dbReference type="OMA" id="RKVDKCC"/>
<dbReference type="PhylomeDB" id="Q8GYH6"/>
<dbReference type="PRO" id="PR:Q8GYH6"/>
<dbReference type="Proteomes" id="UP000006548">
    <property type="component" value="Chromosome 3"/>
</dbReference>
<dbReference type="ExpressionAtlas" id="Q8GYH6">
    <property type="expression patterns" value="baseline and differential"/>
</dbReference>
<dbReference type="GO" id="GO:0005789">
    <property type="term" value="C:endoplasmic reticulum membrane"/>
    <property type="evidence" value="ECO:0007669"/>
    <property type="project" value="UniProtKB-SubCell"/>
</dbReference>
<dbReference type="GO" id="GO:0009617">
    <property type="term" value="P:response to bacterium"/>
    <property type="evidence" value="ECO:0007669"/>
    <property type="project" value="InterPro"/>
</dbReference>
<dbReference type="InterPro" id="IPR003388">
    <property type="entry name" value="Reticulon"/>
</dbReference>
<dbReference type="InterPro" id="IPR045064">
    <property type="entry name" value="Reticulon-like"/>
</dbReference>
<dbReference type="PANTHER" id="PTHR10994">
    <property type="entry name" value="RETICULON"/>
    <property type="match status" value="1"/>
</dbReference>
<dbReference type="PANTHER" id="PTHR10994:SF67">
    <property type="entry name" value="RETICULON-LIKE PROTEIN B16"/>
    <property type="match status" value="1"/>
</dbReference>
<dbReference type="Pfam" id="PF02453">
    <property type="entry name" value="Reticulon"/>
    <property type="match status" value="1"/>
</dbReference>
<dbReference type="PROSITE" id="PS50845">
    <property type="entry name" value="RETICULON"/>
    <property type="match status" value="1"/>
</dbReference>
<accession>Q8GYH6</accession>
<accession>Q0WT47</accession>
<accession>Q3EB92</accession>
<protein>
    <recommendedName>
        <fullName>Reticulon-like protein B16</fullName>
        <shortName>AtRTNLB16</shortName>
    </recommendedName>
</protein>
<name>RTNLP_ARATH</name>
<keyword id="KW-0025">Alternative splicing</keyword>
<keyword id="KW-0256">Endoplasmic reticulum</keyword>
<keyword id="KW-0472">Membrane</keyword>
<keyword id="KW-1185">Reference proteome</keyword>
<keyword id="KW-0812">Transmembrane</keyword>
<keyword id="KW-1133">Transmembrane helix</keyword>
<sequence length="226" mass="25347">MDSLSDIDGDFDGRNEGGSSSDYRLLGRQITVHQFMGGGKAADLLLWRRRHLSLGVIIISTVAWLIFEFSGLPFLSVSSDVLLIVIMISFVHARVSAFRNRQLHSLPELVLSEEMVNSAAASFRIKLNHLLVMAHDVTVGNDFRLFFKVVICLWLLSAIGSYISLCTLLYIGTILSVTIPALYSKYQSKVDKCCGTIHRRLSHHYKIVDENVISRLSWSLSKDKDS</sequence>
<gene>
    <name type="primary">RTNLB16</name>
    <name type="ordered locus">At3g10915</name>
    <name type="ORF">F9F8.30</name>
</gene>